<proteinExistence type="inferred from homology"/>
<protein>
    <recommendedName>
        <fullName evidence="1">Proline--tRNA ligase</fullName>
        <ecNumber evidence="1">6.1.1.15</ecNumber>
    </recommendedName>
    <alternativeName>
        <fullName evidence="1">Prolyl-tRNA synthetase</fullName>
        <shortName evidence="1">ProRS</shortName>
    </alternativeName>
</protein>
<sequence length="618" mass="68683">MKQSKLLIPTLREMPSDAQVISHALMVRAGYVRQVSAGIYAYLPLANRTIEKFKTIMREEFEKIGAVEMLAPALLTADLWRESGRYETYGEDLYKLKNRDNSDFILGPTHEETFTTLVRNAVKSYKQLPLNLYQIQSKYRDEKRPRNGLLRTREFIMKDGYSFHHNYEDLDVTYEDYRQAYEAIFTRAGLDFKGIIGDGGAMGGKDSQEFMAITPARTDLDRWVVLDKSIASMDDIPKEVLEEIKAELAAWMISGEDTIAYSTKSSYAANLEMATNEYKPSSKVAAEDALAEVETPHCKTIDEVAAFLSVDETQTIKTLLFVADNEPVVALLVGNDHINTVKLKNYLAADFLEPASEEEARAFFGAGFGSLGPVNLAQGSRIVADRKVQNLTNAVAGANKDGFHVTGVNPGRDFQAEYVDIREVKEGEMSPDGHGVLQFARGIEVGHIFKLGTRYSDSMGATILDENGRTVPIVMGCYGIGVSRILSAVIEQHARLFVNKTPKGDYRYAWGINFPKELAPFDVHLITVNVKDQVAQDLTAKLEADLMAKGYDVLTDDRNERVGSKFSDSDLIGLPIRVTVGKKAAEGIVEIKIKATGDSIEVNAENLIETLEILTKEH</sequence>
<keyword id="KW-0030">Aminoacyl-tRNA synthetase</keyword>
<keyword id="KW-0067">ATP-binding</keyword>
<keyword id="KW-0963">Cytoplasm</keyword>
<keyword id="KW-0436">Ligase</keyword>
<keyword id="KW-0547">Nucleotide-binding</keyword>
<keyword id="KW-0648">Protein biosynthesis</keyword>
<gene>
    <name evidence="1" type="primary">proS</name>
    <name type="ordered locus">SpyM3_1688</name>
</gene>
<name>SYP_STRP3</name>
<organism>
    <name type="scientific">Streptococcus pyogenes serotype M3 (strain ATCC BAA-595 / MGAS315)</name>
    <dbReference type="NCBI Taxonomy" id="198466"/>
    <lineage>
        <taxon>Bacteria</taxon>
        <taxon>Bacillati</taxon>
        <taxon>Bacillota</taxon>
        <taxon>Bacilli</taxon>
        <taxon>Lactobacillales</taxon>
        <taxon>Streptococcaceae</taxon>
        <taxon>Streptococcus</taxon>
    </lineage>
</organism>
<feature type="chain" id="PRO_0000248785" description="Proline--tRNA ligase">
    <location>
        <begin position="1"/>
        <end position="618"/>
    </location>
</feature>
<dbReference type="EC" id="6.1.1.15" evidence="1"/>
<dbReference type="EMBL" id="AE014074">
    <property type="protein sequence ID" value="AAM80295.1"/>
    <property type="molecule type" value="Genomic_DNA"/>
</dbReference>
<dbReference type="RefSeq" id="WP_011055021.1">
    <property type="nucleotide sequence ID" value="NC_004070.1"/>
</dbReference>
<dbReference type="SMR" id="P0DG54"/>
<dbReference type="KEGG" id="spg:SpyM3_1688"/>
<dbReference type="HOGENOM" id="CLU_016739_0_0_9"/>
<dbReference type="Proteomes" id="UP000000564">
    <property type="component" value="Chromosome"/>
</dbReference>
<dbReference type="GO" id="GO:0005829">
    <property type="term" value="C:cytosol"/>
    <property type="evidence" value="ECO:0007669"/>
    <property type="project" value="TreeGrafter"/>
</dbReference>
<dbReference type="GO" id="GO:0002161">
    <property type="term" value="F:aminoacyl-tRNA deacylase activity"/>
    <property type="evidence" value="ECO:0007669"/>
    <property type="project" value="InterPro"/>
</dbReference>
<dbReference type="GO" id="GO:0005524">
    <property type="term" value="F:ATP binding"/>
    <property type="evidence" value="ECO:0007669"/>
    <property type="project" value="UniProtKB-UniRule"/>
</dbReference>
<dbReference type="GO" id="GO:0140096">
    <property type="term" value="F:catalytic activity, acting on a protein"/>
    <property type="evidence" value="ECO:0007669"/>
    <property type="project" value="UniProtKB-ARBA"/>
</dbReference>
<dbReference type="GO" id="GO:0004827">
    <property type="term" value="F:proline-tRNA ligase activity"/>
    <property type="evidence" value="ECO:0007669"/>
    <property type="project" value="UniProtKB-UniRule"/>
</dbReference>
<dbReference type="GO" id="GO:0016740">
    <property type="term" value="F:transferase activity"/>
    <property type="evidence" value="ECO:0007669"/>
    <property type="project" value="UniProtKB-ARBA"/>
</dbReference>
<dbReference type="GO" id="GO:0006433">
    <property type="term" value="P:prolyl-tRNA aminoacylation"/>
    <property type="evidence" value="ECO:0007669"/>
    <property type="project" value="UniProtKB-UniRule"/>
</dbReference>
<dbReference type="CDD" id="cd04334">
    <property type="entry name" value="ProRS-INS"/>
    <property type="match status" value="1"/>
</dbReference>
<dbReference type="CDD" id="cd00861">
    <property type="entry name" value="ProRS_anticodon_short"/>
    <property type="match status" value="1"/>
</dbReference>
<dbReference type="FunFam" id="3.40.50.800:FF:000011">
    <property type="entry name" value="Proline--tRNA ligase"/>
    <property type="match status" value="1"/>
</dbReference>
<dbReference type="Gene3D" id="3.40.50.800">
    <property type="entry name" value="Anticodon-binding domain"/>
    <property type="match status" value="1"/>
</dbReference>
<dbReference type="Gene3D" id="3.30.930.10">
    <property type="entry name" value="Bira Bifunctional Protein, Domain 2"/>
    <property type="match status" value="2"/>
</dbReference>
<dbReference type="Gene3D" id="3.90.960.10">
    <property type="entry name" value="YbaK/aminoacyl-tRNA synthetase-associated domain"/>
    <property type="match status" value="1"/>
</dbReference>
<dbReference type="HAMAP" id="MF_01569">
    <property type="entry name" value="Pro_tRNA_synth_type1"/>
    <property type="match status" value="1"/>
</dbReference>
<dbReference type="InterPro" id="IPR002314">
    <property type="entry name" value="aa-tRNA-synt_IIb"/>
</dbReference>
<dbReference type="InterPro" id="IPR006195">
    <property type="entry name" value="aa-tRNA-synth_II"/>
</dbReference>
<dbReference type="InterPro" id="IPR045864">
    <property type="entry name" value="aa-tRNA-synth_II/BPL/LPL"/>
</dbReference>
<dbReference type="InterPro" id="IPR004154">
    <property type="entry name" value="Anticodon-bd"/>
</dbReference>
<dbReference type="InterPro" id="IPR036621">
    <property type="entry name" value="Anticodon-bd_dom_sf"/>
</dbReference>
<dbReference type="InterPro" id="IPR002316">
    <property type="entry name" value="Pro-tRNA-ligase_IIa"/>
</dbReference>
<dbReference type="InterPro" id="IPR004500">
    <property type="entry name" value="Pro-tRNA-synth_IIa_bac-type"/>
</dbReference>
<dbReference type="InterPro" id="IPR023717">
    <property type="entry name" value="Pro-tRNA-Synthase_IIa_type1"/>
</dbReference>
<dbReference type="InterPro" id="IPR050062">
    <property type="entry name" value="Pro-tRNA_synthetase"/>
</dbReference>
<dbReference type="InterPro" id="IPR044140">
    <property type="entry name" value="ProRS_anticodon_short"/>
</dbReference>
<dbReference type="InterPro" id="IPR036754">
    <property type="entry name" value="YbaK/aa-tRNA-synt-asso_dom_sf"/>
</dbReference>
<dbReference type="InterPro" id="IPR007214">
    <property type="entry name" value="YbaK/aa-tRNA-synth-assoc-dom"/>
</dbReference>
<dbReference type="NCBIfam" id="NF006625">
    <property type="entry name" value="PRK09194.1"/>
    <property type="match status" value="1"/>
</dbReference>
<dbReference type="NCBIfam" id="TIGR00409">
    <property type="entry name" value="proS_fam_II"/>
    <property type="match status" value="2"/>
</dbReference>
<dbReference type="PANTHER" id="PTHR42753">
    <property type="entry name" value="MITOCHONDRIAL RIBOSOME PROTEIN L39/PROLYL-TRNA LIGASE FAMILY MEMBER"/>
    <property type="match status" value="1"/>
</dbReference>
<dbReference type="PANTHER" id="PTHR42753:SF2">
    <property type="entry name" value="PROLINE--TRNA LIGASE"/>
    <property type="match status" value="1"/>
</dbReference>
<dbReference type="Pfam" id="PF03129">
    <property type="entry name" value="HGTP_anticodon"/>
    <property type="match status" value="1"/>
</dbReference>
<dbReference type="Pfam" id="PF00587">
    <property type="entry name" value="tRNA-synt_2b"/>
    <property type="match status" value="1"/>
</dbReference>
<dbReference type="Pfam" id="PF04073">
    <property type="entry name" value="tRNA_edit"/>
    <property type="match status" value="1"/>
</dbReference>
<dbReference type="PRINTS" id="PR01046">
    <property type="entry name" value="TRNASYNTHPRO"/>
</dbReference>
<dbReference type="SUPFAM" id="SSF52954">
    <property type="entry name" value="Class II aaRS ABD-related"/>
    <property type="match status" value="1"/>
</dbReference>
<dbReference type="SUPFAM" id="SSF55681">
    <property type="entry name" value="Class II aaRS and biotin synthetases"/>
    <property type="match status" value="1"/>
</dbReference>
<dbReference type="SUPFAM" id="SSF55826">
    <property type="entry name" value="YbaK/ProRS associated domain"/>
    <property type="match status" value="1"/>
</dbReference>
<dbReference type="PROSITE" id="PS50862">
    <property type="entry name" value="AA_TRNA_LIGASE_II"/>
    <property type="match status" value="1"/>
</dbReference>
<evidence type="ECO:0000255" key="1">
    <source>
        <dbReference type="HAMAP-Rule" id="MF_01569"/>
    </source>
</evidence>
<reference key="1">
    <citation type="journal article" date="2002" name="Proc. Natl. Acad. Sci. U.S.A.">
        <title>Genome sequence of a serotype M3 strain of group A Streptococcus: phage-encoded toxins, the high-virulence phenotype, and clone emergence.</title>
        <authorList>
            <person name="Beres S.B."/>
            <person name="Sylva G.L."/>
            <person name="Barbian K.D."/>
            <person name="Lei B."/>
            <person name="Hoff J.S."/>
            <person name="Mammarella N.D."/>
            <person name="Liu M.-Y."/>
            <person name="Smoot J.C."/>
            <person name="Porcella S.F."/>
            <person name="Parkins L.D."/>
            <person name="Campbell D.S."/>
            <person name="Smith T.M."/>
            <person name="McCormick J.K."/>
            <person name="Leung D.Y.M."/>
            <person name="Schlievert P.M."/>
            <person name="Musser J.M."/>
        </authorList>
    </citation>
    <scope>NUCLEOTIDE SEQUENCE [LARGE SCALE GENOMIC DNA]</scope>
    <source>
        <strain>ATCC BAA-595 / MGAS315</strain>
    </source>
</reference>
<comment type="function">
    <text evidence="1">Catalyzes the attachment of proline to tRNA(Pro) in a two-step reaction: proline is first activated by ATP to form Pro-AMP and then transferred to the acceptor end of tRNA(Pro). As ProRS can inadvertently accommodate and process non-cognate amino acids such as alanine and cysteine, to avoid such errors it has two additional distinct editing activities against alanine. One activity is designated as 'pretransfer' editing and involves the tRNA(Pro)-independent hydrolysis of activated Ala-AMP. The other activity is designated 'posttransfer' editing and involves deacylation of mischarged Ala-tRNA(Pro). The misacylated Cys-tRNA(Pro) is not edited by ProRS.</text>
</comment>
<comment type="catalytic activity">
    <reaction evidence="1">
        <text>tRNA(Pro) + L-proline + ATP = L-prolyl-tRNA(Pro) + AMP + diphosphate</text>
        <dbReference type="Rhea" id="RHEA:14305"/>
        <dbReference type="Rhea" id="RHEA-COMP:9700"/>
        <dbReference type="Rhea" id="RHEA-COMP:9702"/>
        <dbReference type="ChEBI" id="CHEBI:30616"/>
        <dbReference type="ChEBI" id="CHEBI:33019"/>
        <dbReference type="ChEBI" id="CHEBI:60039"/>
        <dbReference type="ChEBI" id="CHEBI:78442"/>
        <dbReference type="ChEBI" id="CHEBI:78532"/>
        <dbReference type="ChEBI" id="CHEBI:456215"/>
        <dbReference type="EC" id="6.1.1.15"/>
    </reaction>
</comment>
<comment type="subunit">
    <text evidence="1">Homodimer.</text>
</comment>
<comment type="subcellular location">
    <subcellularLocation>
        <location evidence="1">Cytoplasm</location>
    </subcellularLocation>
</comment>
<comment type="domain">
    <text evidence="1">Consists of three domains: the N-terminal catalytic domain, the editing domain and the C-terminal anticodon-binding domain.</text>
</comment>
<comment type="similarity">
    <text evidence="1">Belongs to the class-II aminoacyl-tRNA synthetase family. ProS type 1 subfamily.</text>
</comment>
<accession>P0DG54</accession>
<accession>Q79W79</accession>
<accession>Q8K5S7</accession>